<comment type="catalytic activity">
    <reaction evidence="1">
        <text>S-adenosyl-L-methionine + a thiopurine = S-adenosyl-L-homocysteine + a thiopurine S-methylether.</text>
        <dbReference type="EC" id="2.1.1.67"/>
    </reaction>
</comment>
<comment type="subcellular location">
    <subcellularLocation>
        <location evidence="1">Cytoplasm</location>
    </subcellularLocation>
</comment>
<comment type="similarity">
    <text evidence="1">Belongs to the class I-like SAM-binding methyltransferase superfamily. TPMT family.</text>
</comment>
<name>TPMT_ALIF1</name>
<accession>Q5E4N9</accession>
<dbReference type="EC" id="2.1.1.67" evidence="1"/>
<dbReference type="EMBL" id="CP000020">
    <property type="protein sequence ID" value="AAW86007.1"/>
    <property type="molecule type" value="Genomic_DNA"/>
</dbReference>
<dbReference type="RefSeq" id="WP_011262092.1">
    <property type="nucleotide sequence ID" value="NC_006840.2"/>
</dbReference>
<dbReference type="RefSeq" id="YP_204895.1">
    <property type="nucleotide sequence ID" value="NC_006840.2"/>
</dbReference>
<dbReference type="SMR" id="Q5E4N9"/>
<dbReference type="STRING" id="312309.VF_1512"/>
<dbReference type="EnsemblBacteria" id="AAW86007">
    <property type="protein sequence ID" value="AAW86007"/>
    <property type="gene ID" value="VF_1512"/>
</dbReference>
<dbReference type="GeneID" id="54164185"/>
<dbReference type="KEGG" id="vfi:VF_1512"/>
<dbReference type="PATRIC" id="fig|312309.11.peg.1529"/>
<dbReference type="eggNOG" id="COG0500">
    <property type="taxonomic scope" value="Bacteria"/>
</dbReference>
<dbReference type="HOGENOM" id="CLU_085515_1_0_6"/>
<dbReference type="OrthoDB" id="9778208at2"/>
<dbReference type="Proteomes" id="UP000000537">
    <property type="component" value="Chromosome I"/>
</dbReference>
<dbReference type="GO" id="GO:0005737">
    <property type="term" value="C:cytoplasm"/>
    <property type="evidence" value="ECO:0007669"/>
    <property type="project" value="UniProtKB-SubCell"/>
</dbReference>
<dbReference type="GO" id="GO:0008119">
    <property type="term" value="F:thiopurine S-methyltransferase activity"/>
    <property type="evidence" value="ECO:0007669"/>
    <property type="project" value="UniProtKB-UniRule"/>
</dbReference>
<dbReference type="GO" id="GO:0032259">
    <property type="term" value="P:methylation"/>
    <property type="evidence" value="ECO:0007669"/>
    <property type="project" value="UniProtKB-KW"/>
</dbReference>
<dbReference type="GO" id="GO:0010038">
    <property type="term" value="P:response to metal ion"/>
    <property type="evidence" value="ECO:0007669"/>
    <property type="project" value="InterPro"/>
</dbReference>
<dbReference type="FunFam" id="3.40.50.150:FF:000101">
    <property type="entry name" value="Thiopurine S-methyltransferase"/>
    <property type="match status" value="1"/>
</dbReference>
<dbReference type="Gene3D" id="3.40.50.150">
    <property type="entry name" value="Vaccinia Virus protein VP39"/>
    <property type="match status" value="1"/>
</dbReference>
<dbReference type="HAMAP" id="MF_00812">
    <property type="entry name" value="Thiopur_methtran"/>
    <property type="match status" value="1"/>
</dbReference>
<dbReference type="InterPro" id="IPR029063">
    <property type="entry name" value="SAM-dependent_MTases_sf"/>
</dbReference>
<dbReference type="InterPro" id="IPR022474">
    <property type="entry name" value="Thiopur_S-MeTfrase_Se/Te_detox"/>
</dbReference>
<dbReference type="InterPro" id="IPR025835">
    <property type="entry name" value="Thiopurine_S-MeTrfase"/>
</dbReference>
<dbReference type="InterPro" id="IPR008854">
    <property type="entry name" value="TPMT"/>
</dbReference>
<dbReference type="NCBIfam" id="NF009732">
    <property type="entry name" value="PRK13255.1"/>
    <property type="match status" value="1"/>
</dbReference>
<dbReference type="NCBIfam" id="TIGR03840">
    <property type="entry name" value="TMPT_Se_Te"/>
    <property type="match status" value="1"/>
</dbReference>
<dbReference type="PANTHER" id="PTHR10259">
    <property type="entry name" value="THIOPURINE S-METHYLTRANSFERASE"/>
    <property type="match status" value="1"/>
</dbReference>
<dbReference type="PANTHER" id="PTHR10259:SF11">
    <property type="entry name" value="THIOPURINE S-METHYLTRANSFERASE"/>
    <property type="match status" value="1"/>
</dbReference>
<dbReference type="Pfam" id="PF05724">
    <property type="entry name" value="TPMT"/>
    <property type="match status" value="1"/>
</dbReference>
<dbReference type="PIRSF" id="PIRSF023956">
    <property type="entry name" value="Thiopurine_S-methyltransferase"/>
    <property type="match status" value="1"/>
</dbReference>
<dbReference type="SUPFAM" id="SSF53335">
    <property type="entry name" value="S-adenosyl-L-methionine-dependent methyltransferases"/>
    <property type="match status" value="1"/>
</dbReference>
<dbReference type="PROSITE" id="PS51585">
    <property type="entry name" value="SAM_MT_TPMT"/>
    <property type="match status" value="1"/>
</dbReference>
<gene>
    <name evidence="1" type="primary">tpm</name>
    <name type="ordered locus">VF_1512</name>
</gene>
<evidence type="ECO:0000255" key="1">
    <source>
        <dbReference type="HAMAP-Rule" id="MF_00812"/>
    </source>
</evidence>
<reference key="1">
    <citation type="journal article" date="2005" name="Proc. Natl. Acad. Sci. U.S.A.">
        <title>Complete genome sequence of Vibrio fischeri: a symbiotic bacterium with pathogenic congeners.</title>
        <authorList>
            <person name="Ruby E.G."/>
            <person name="Urbanowski M."/>
            <person name="Campbell J."/>
            <person name="Dunn A."/>
            <person name="Faini M."/>
            <person name="Gunsalus R."/>
            <person name="Lostroh P."/>
            <person name="Lupp C."/>
            <person name="McCann J."/>
            <person name="Millikan D."/>
            <person name="Schaefer A."/>
            <person name="Stabb E."/>
            <person name="Stevens A."/>
            <person name="Visick K."/>
            <person name="Whistler C."/>
            <person name="Greenberg E.P."/>
        </authorList>
    </citation>
    <scope>NUCLEOTIDE SEQUENCE [LARGE SCALE GENOMIC DNA]</scope>
    <source>
        <strain>ATCC 700601 / ES114</strain>
    </source>
</reference>
<keyword id="KW-0963">Cytoplasm</keyword>
<keyword id="KW-0489">Methyltransferase</keyword>
<keyword id="KW-1185">Reference proteome</keyword>
<keyword id="KW-0949">S-adenosyl-L-methionine</keyword>
<keyword id="KW-0808">Transferase</keyword>
<organism>
    <name type="scientific">Aliivibrio fischeri (strain ATCC 700601 / ES114)</name>
    <name type="common">Vibrio fischeri</name>
    <dbReference type="NCBI Taxonomy" id="312309"/>
    <lineage>
        <taxon>Bacteria</taxon>
        <taxon>Pseudomonadati</taxon>
        <taxon>Pseudomonadota</taxon>
        <taxon>Gammaproteobacteria</taxon>
        <taxon>Vibrionales</taxon>
        <taxon>Vibrionaceae</taxon>
        <taxon>Aliivibrio</taxon>
    </lineage>
</organism>
<protein>
    <recommendedName>
        <fullName evidence="1">Thiopurine S-methyltransferase</fullName>
        <ecNumber evidence="1">2.1.1.67</ecNumber>
    </recommendedName>
    <alternativeName>
        <fullName evidence="1">Thiopurine methyltransferase</fullName>
    </alternativeName>
</protein>
<feature type="chain" id="PRO_0000220134" description="Thiopurine S-methyltransferase">
    <location>
        <begin position="1"/>
        <end position="213"/>
    </location>
</feature>
<feature type="binding site" evidence="1">
    <location>
        <position position="10"/>
    </location>
    <ligand>
        <name>S-adenosyl-L-methionine</name>
        <dbReference type="ChEBI" id="CHEBI:59789"/>
    </ligand>
</feature>
<feature type="binding site" evidence="1">
    <location>
        <position position="45"/>
    </location>
    <ligand>
        <name>S-adenosyl-L-methionine</name>
        <dbReference type="ChEBI" id="CHEBI:59789"/>
    </ligand>
</feature>
<feature type="binding site" evidence="1">
    <location>
        <position position="66"/>
    </location>
    <ligand>
        <name>S-adenosyl-L-methionine</name>
        <dbReference type="ChEBI" id="CHEBI:59789"/>
    </ligand>
</feature>
<feature type="binding site" evidence="1">
    <location>
        <position position="121"/>
    </location>
    <ligand>
        <name>S-adenosyl-L-methionine</name>
        <dbReference type="ChEBI" id="CHEBI:59789"/>
    </ligand>
</feature>
<sequence length="213" mass="24538">MEHEFWQKKWASNVIGFHLPDTNPILTQYWSALEPKRNETVFVPLCGKSMDLDWLAERHNSVTGVELSQIAVRAFFAERLYTPTVTQLSSTLELYEFDEFTIYSGDYFVAPIEAADLIYDRAALVALPKEMREEYVQVLRSRLKEGGRILLVTLDYDQNEMAGPPFSVPENEVQALFSGMKITRLQRDEADAEHPKIKKGLSRFAEEVWLIES</sequence>
<proteinExistence type="inferred from homology"/>